<sequence>MRRPLVAGNWKMHGTHSSVAELIKGLRQLALPSGVDVAVMPPCLFISQVIQGLAGKAIDVGAQNSAVEPMQGALTGETAPSQLADVGCSMVLVGHSERRLILGESDEVVSRKFAAAQSCGLVPVLCVGETRAEREAGKTLEVVARQLGSVIDELGVGAFARAVVAYEPVWAIGTGLTASPAQAQEVHAAIRAQLAAENAEVAKGVRLLYGGSVKAASAAELFGMPDIDGGLVGGASLNADEFGAICRAAGS</sequence>
<keyword id="KW-0963">Cytoplasm</keyword>
<keyword id="KW-0312">Gluconeogenesis</keyword>
<keyword id="KW-0324">Glycolysis</keyword>
<keyword id="KW-0413">Isomerase</keyword>
<reference key="1">
    <citation type="journal article" date="2009" name="Genome Res.">
        <title>Newly introduced genomic prophage islands are critical determinants of in vivo competitiveness in the Liverpool epidemic strain of Pseudomonas aeruginosa.</title>
        <authorList>
            <person name="Winstanley C."/>
            <person name="Langille M.G.I."/>
            <person name="Fothergill J.L."/>
            <person name="Kukavica-Ibrulj I."/>
            <person name="Paradis-Bleau C."/>
            <person name="Sanschagrin F."/>
            <person name="Thomson N.R."/>
            <person name="Winsor G.L."/>
            <person name="Quail M.A."/>
            <person name="Lennard N."/>
            <person name="Bignell A."/>
            <person name="Clarke L."/>
            <person name="Seeger K."/>
            <person name="Saunders D."/>
            <person name="Harris D."/>
            <person name="Parkhill J."/>
            <person name="Hancock R.E.W."/>
            <person name="Brinkman F.S.L."/>
            <person name="Levesque R.C."/>
        </authorList>
    </citation>
    <scope>NUCLEOTIDE SEQUENCE [LARGE SCALE GENOMIC DNA]</scope>
    <source>
        <strain>LESB58</strain>
    </source>
</reference>
<comment type="function">
    <text evidence="1">Involved in the gluconeogenesis. Catalyzes stereospecifically the conversion of dihydroxyacetone phosphate (DHAP) to D-glyceraldehyde-3-phosphate (G3P).</text>
</comment>
<comment type="catalytic activity">
    <reaction evidence="1">
        <text>D-glyceraldehyde 3-phosphate = dihydroxyacetone phosphate</text>
        <dbReference type="Rhea" id="RHEA:18585"/>
        <dbReference type="ChEBI" id="CHEBI:57642"/>
        <dbReference type="ChEBI" id="CHEBI:59776"/>
        <dbReference type="EC" id="5.3.1.1"/>
    </reaction>
</comment>
<comment type="pathway">
    <text evidence="1">Carbohydrate biosynthesis; gluconeogenesis.</text>
</comment>
<comment type="pathway">
    <text evidence="1">Carbohydrate degradation; glycolysis; D-glyceraldehyde 3-phosphate from glycerone phosphate: step 1/1.</text>
</comment>
<comment type="subunit">
    <text evidence="1">Homodimer.</text>
</comment>
<comment type="subcellular location">
    <subcellularLocation>
        <location evidence="1">Cytoplasm</location>
    </subcellularLocation>
</comment>
<comment type="similarity">
    <text evidence="1">Belongs to the triosephosphate isomerase family.</text>
</comment>
<evidence type="ECO:0000255" key="1">
    <source>
        <dbReference type="HAMAP-Rule" id="MF_00147"/>
    </source>
</evidence>
<gene>
    <name evidence="1" type="primary">tpiA</name>
    <name type="ordered locus">PLES_51331</name>
</gene>
<organism>
    <name type="scientific">Pseudomonas aeruginosa (strain LESB58)</name>
    <dbReference type="NCBI Taxonomy" id="557722"/>
    <lineage>
        <taxon>Bacteria</taxon>
        <taxon>Pseudomonadati</taxon>
        <taxon>Pseudomonadota</taxon>
        <taxon>Gammaproteobacteria</taxon>
        <taxon>Pseudomonadales</taxon>
        <taxon>Pseudomonadaceae</taxon>
        <taxon>Pseudomonas</taxon>
    </lineage>
</organism>
<proteinExistence type="inferred from homology"/>
<dbReference type="EC" id="5.3.1.1" evidence="1"/>
<dbReference type="EMBL" id="FM209186">
    <property type="protein sequence ID" value="CAW29887.1"/>
    <property type="molecule type" value="Genomic_DNA"/>
</dbReference>
<dbReference type="RefSeq" id="WP_003100513.1">
    <property type="nucleotide sequence ID" value="NC_011770.1"/>
</dbReference>
<dbReference type="SMR" id="B7V1G0"/>
<dbReference type="KEGG" id="pag:PLES_51331"/>
<dbReference type="HOGENOM" id="CLU_024251_2_1_6"/>
<dbReference type="UniPathway" id="UPA00109">
    <property type="reaction ID" value="UER00189"/>
</dbReference>
<dbReference type="UniPathway" id="UPA00138"/>
<dbReference type="GO" id="GO:0005829">
    <property type="term" value="C:cytosol"/>
    <property type="evidence" value="ECO:0007669"/>
    <property type="project" value="TreeGrafter"/>
</dbReference>
<dbReference type="GO" id="GO:0004807">
    <property type="term" value="F:triose-phosphate isomerase activity"/>
    <property type="evidence" value="ECO:0007669"/>
    <property type="project" value="UniProtKB-UniRule"/>
</dbReference>
<dbReference type="GO" id="GO:0006094">
    <property type="term" value="P:gluconeogenesis"/>
    <property type="evidence" value="ECO:0007669"/>
    <property type="project" value="UniProtKB-UniRule"/>
</dbReference>
<dbReference type="GO" id="GO:0046166">
    <property type="term" value="P:glyceraldehyde-3-phosphate biosynthetic process"/>
    <property type="evidence" value="ECO:0007669"/>
    <property type="project" value="TreeGrafter"/>
</dbReference>
<dbReference type="GO" id="GO:0019563">
    <property type="term" value="P:glycerol catabolic process"/>
    <property type="evidence" value="ECO:0007669"/>
    <property type="project" value="TreeGrafter"/>
</dbReference>
<dbReference type="GO" id="GO:0006096">
    <property type="term" value="P:glycolytic process"/>
    <property type="evidence" value="ECO:0007669"/>
    <property type="project" value="UniProtKB-UniRule"/>
</dbReference>
<dbReference type="CDD" id="cd00311">
    <property type="entry name" value="TIM"/>
    <property type="match status" value="1"/>
</dbReference>
<dbReference type="FunFam" id="3.20.20.70:FF:000016">
    <property type="entry name" value="Triosephosphate isomerase"/>
    <property type="match status" value="1"/>
</dbReference>
<dbReference type="Gene3D" id="3.20.20.70">
    <property type="entry name" value="Aldolase class I"/>
    <property type="match status" value="1"/>
</dbReference>
<dbReference type="HAMAP" id="MF_00147_B">
    <property type="entry name" value="TIM_B"/>
    <property type="match status" value="1"/>
</dbReference>
<dbReference type="InterPro" id="IPR013785">
    <property type="entry name" value="Aldolase_TIM"/>
</dbReference>
<dbReference type="InterPro" id="IPR035990">
    <property type="entry name" value="TIM_sf"/>
</dbReference>
<dbReference type="InterPro" id="IPR022896">
    <property type="entry name" value="TrioseP_Isoase_bac/euk"/>
</dbReference>
<dbReference type="InterPro" id="IPR000652">
    <property type="entry name" value="Triosephosphate_isomerase"/>
</dbReference>
<dbReference type="InterPro" id="IPR020861">
    <property type="entry name" value="Triosephosphate_isomerase_AS"/>
</dbReference>
<dbReference type="NCBIfam" id="TIGR00419">
    <property type="entry name" value="tim"/>
    <property type="match status" value="1"/>
</dbReference>
<dbReference type="PANTHER" id="PTHR21139">
    <property type="entry name" value="TRIOSEPHOSPHATE ISOMERASE"/>
    <property type="match status" value="1"/>
</dbReference>
<dbReference type="PANTHER" id="PTHR21139:SF42">
    <property type="entry name" value="TRIOSEPHOSPHATE ISOMERASE"/>
    <property type="match status" value="1"/>
</dbReference>
<dbReference type="Pfam" id="PF00121">
    <property type="entry name" value="TIM"/>
    <property type="match status" value="1"/>
</dbReference>
<dbReference type="SUPFAM" id="SSF51351">
    <property type="entry name" value="Triosephosphate isomerase (TIM)"/>
    <property type="match status" value="1"/>
</dbReference>
<dbReference type="PROSITE" id="PS00171">
    <property type="entry name" value="TIM_1"/>
    <property type="match status" value="1"/>
</dbReference>
<dbReference type="PROSITE" id="PS51440">
    <property type="entry name" value="TIM_2"/>
    <property type="match status" value="1"/>
</dbReference>
<name>TPIS_PSEA8</name>
<feature type="chain" id="PRO_1000196987" description="Triosephosphate isomerase">
    <location>
        <begin position="1"/>
        <end position="251"/>
    </location>
</feature>
<feature type="active site" description="Electrophile" evidence="1">
    <location>
        <position position="95"/>
    </location>
</feature>
<feature type="active site" description="Proton acceptor" evidence="1">
    <location>
        <position position="167"/>
    </location>
</feature>
<feature type="binding site" evidence="1">
    <location>
        <begin position="9"/>
        <end position="11"/>
    </location>
    <ligand>
        <name>substrate</name>
    </ligand>
</feature>
<feature type="binding site" evidence="1">
    <location>
        <position position="173"/>
    </location>
    <ligand>
        <name>substrate</name>
    </ligand>
</feature>
<feature type="binding site" evidence="1">
    <location>
        <position position="212"/>
    </location>
    <ligand>
        <name>substrate</name>
    </ligand>
</feature>
<feature type="binding site" evidence="1">
    <location>
        <begin position="233"/>
        <end position="234"/>
    </location>
    <ligand>
        <name>substrate</name>
    </ligand>
</feature>
<accession>B7V1G0</accession>
<protein>
    <recommendedName>
        <fullName evidence="1">Triosephosphate isomerase</fullName>
        <shortName evidence="1">TIM</shortName>
        <shortName evidence="1">TPI</shortName>
        <ecNumber evidence="1">5.3.1.1</ecNumber>
    </recommendedName>
    <alternativeName>
        <fullName evidence="1">Triose-phosphate isomerase</fullName>
    </alternativeName>
</protein>